<reference key="1">
    <citation type="journal article" date="2002" name="Nucleic Acids Res.">
        <title>Genome sequence of Oceanobacillus iheyensis isolated from the Iheya Ridge and its unexpected adaptive capabilities to extreme environments.</title>
        <authorList>
            <person name="Takami H."/>
            <person name="Takaki Y."/>
            <person name="Uchiyama I."/>
        </authorList>
    </citation>
    <scope>NUCLEOTIDE SEQUENCE [LARGE SCALE GENOMIC DNA]</scope>
    <source>
        <strain>DSM 14371 / CIP 107618 / JCM 11309 / KCTC 3954 / HTE831</strain>
    </source>
</reference>
<gene>
    <name evidence="1" type="primary">rpsL</name>
    <name type="ordered locus">OB0114</name>
</gene>
<dbReference type="EMBL" id="BA000028">
    <property type="protein sequence ID" value="BAC12070.1"/>
    <property type="molecule type" value="Genomic_DNA"/>
</dbReference>
<dbReference type="RefSeq" id="WP_011064517.1">
    <property type="nucleotide sequence ID" value="NC_004193.1"/>
</dbReference>
<dbReference type="SMR" id="P59165"/>
<dbReference type="STRING" id="221109.gene:10732304"/>
<dbReference type="KEGG" id="oih:OB0114"/>
<dbReference type="eggNOG" id="COG0048">
    <property type="taxonomic scope" value="Bacteria"/>
</dbReference>
<dbReference type="HOGENOM" id="CLU_104295_1_1_9"/>
<dbReference type="OrthoDB" id="9802366at2"/>
<dbReference type="PhylomeDB" id="P59165"/>
<dbReference type="Proteomes" id="UP000000822">
    <property type="component" value="Chromosome"/>
</dbReference>
<dbReference type="GO" id="GO:0015935">
    <property type="term" value="C:small ribosomal subunit"/>
    <property type="evidence" value="ECO:0007669"/>
    <property type="project" value="InterPro"/>
</dbReference>
<dbReference type="GO" id="GO:0019843">
    <property type="term" value="F:rRNA binding"/>
    <property type="evidence" value="ECO:0007669"/>
    <property type="project" value="UniProtKB-UniRule"/>
</dbReference>
<dbReference type="GO" id="GO:0003735">
    <property type="term" value="F:structural constituent of ribosome"/>
    <property type="evidence" value="ECO:0007669"/>
    <property type="project" value="InterPro"/>
</dbReference>
<dbReference type="GO" id="GO:0000049">
    <property type="term" value="F:tRNA binding"/>
    <property type="evidence" value="ECO:0007669"/>
    <property type="project" value="UniProtKB-UniRule"/>
</dbReference>
<dbReference type="GO" id="GO:0006412">
    <property type="term" value="P:translation"/>
    <property type="evidence" value="ECO:0007669"/>
    <property type="project" value="UniProtKB-UniRule"/>
</dbReference>
<dbReference type="CDD" id="cd03368">
    <property type="entry name" value="Ribosomal_S12"/>
    <property type="match status" value="1"/>
</dbReference>
<dbReference type="FunFam" id="2.40.50.140:FF:000001">
    <property type="entry name" value="30S ribosomal protein S12"/>
    <property type="match status" value="1"/>
</dbReference>
<dbReference type="Gene3D" id="2.40.50.140">
    <property type="entry name" value="Nucleic acid-binding proteins"/>
    <property type="match status" value="1"/>
</dbReference>
<dbReference type="HAMAP" id="MF_00403_B">
    <property type="entry name" value="Ribosomal_uS12_B"/>
    <property type="match status" value="1"/>
</dbReference>
<dbReference type="InterPro" id="IPR012340">
    <property type="entry name" value="NA-bd_OB-fold"/>
</dbReference>
<dbReference type="InterPro" id="IPR006032">
    <property type="entry name" value="Ribosomal_uS12"/>
</dbReference>
<dbReference type="InterPro" id="IPR005679">
    <property type="entry name" value="Ribosomal_uS12_bac"/>
</dbReference>
<dbReference type="NCBIfam" id="TIGR00981">
    <property type="entry name" value="rpsL_bact"/>
    <property type="match status" value="1"/>
</dbReference>
<dbReference type="PANTHER" id="PTHR11652">
    <property type="entry name" value="30S RIBOSOMAL PROTEIN S12 FAMILY MEMBER"/>
    <property type="match status" value="1"/>
</dbReference>
<dbReference type="Pfam" id="PF00164">
    <property type="entry name" value="Ribosom_S12_S23"/>
    <property type="match status" value="1"/>
</dbReference>
<dbReference type="PIRSF" id="PIRSF002133">
    <property type="entry name" value="Ribosomal_S12/S23"/>
    <property type="match status" value="1"/>
</dbReference>
<dbReference type="PRINTS" id="PR01034">
    <property type="entry name" value="RIBOSOMALS12"/>
</dbReference>
<dbReference type="SUPFAM" id="SSF50249">
    <property type="entry name" value="Nucleic acid-binding proteins"/>
    <property type="match status" value="1"/>
</dbReference>
<dbReference type="PROSITE" id="PS00055">
    <property type="entry name" value="RIBOSOMAL_S12"/>
    <property type="match status" value="1"/>
</dbReference>
<accession>P59165</accession>
<name>RS12_OCEIH</name>
<comment type="function">
    <text evidence="1">With S4 and S5 plays an important role in translational accuracy.</text>
</comment>
<comment type="function">
    <text evidence="1">Interacts with and stabilizes bases of the 16S rRNA that are involved in tRNA selection in the A site and with the mRNA backbone. Located at the interface of the 30S and 50S subunits, it traverses the body of the 30S subunit contacting proteins on the other side and probably holding the rRNA structure together. The combined cluster of proteins S8, S12 and S17 appears to hold together the shoulder and platform of the 30S subunit.</text>
</comment>
<comment type="subunit">
    <text evidence="1">Part of the 30S ribosomal subunit. Contacts proteins S8 and S17. May interact with IF1 in the 30S initiation complex.</text>
</comment>
<comment type="similarity">
    <text evidence="1">Belongs to the universal ribosomal protein uS12 family.</text>
</comment>
<comment type="caution">
    <text evidence="3">Because the enzyme that would modify Asp-102 to 3-methylthioaspartic acid has not been found in the proteome of this organism, that modification is not predicted.</text>
</comment>
<keyword id="KW-1185">Reference proteome</keyword>
<keyword id="KW-0687">Ribonucleoprotein</keyword>
<keyword id="KW-0689">Ribosomal protein</keyword>
<keyword id="KW-0694">RNA-binding</keyword>
<keyword id="KW-0699">rRNA-binding</keyword>
<keyword id="KW-0820">tRNA-binding</keyword>
<protein>
    <recommendedName>
        <fullName evidence="1">Small ribosomal subunit protein uS12</fullName>
    </recommendedName>
    <alternativeName>
        <fullName evidence="3">30S ribosomal protein S12</fullName>
    </alternativeName>
</protein>
<proteinExistence type="inferred from homology"/>
<evidence type="ECO:0000255" key="1">
    <source>
        <dbReference type="HAMAP-Rule" id="MF_00403"/>
    </source>
</evidence>
<evidence type="ECO:0000256" key="2">
    <source>
        <dbReference type="SAM" id="MobiDB-lite"/>
    </source>
</evidence>
<evidence type="ECO:0000305" key="3"/>
<feature type="chain" id="PRO_0000146278" description="Small ribosomal subunit protein uS12">
    <location>
        <begin position="1"/>
        <end position="137"/>
    </location>
</feature>
<feature type="region of interest" description="Disordered" evidence="2">
    <location>
        <begin position="1"/>
        <end position="43"/>
    </location>
</feature>
<organism>
    <name type="scientific">Oceanobacillus iheyensis (strain DSM 14371 / CIP 107618 / JCM 11309 / KCTC 3954 / HTE831)</name>
    <dbReference type="NCBI Taxonomy" id="221109"/>
    <lineage>
        <taxon>Bacteria</taxon>
        <taxon>Bacillati</taxon>
        <taxon>Bacillota</taxon>
        <taxon>Bacilli</taxon>
        <taxon>Bacillales</taxon>
        <taxon>Bacillaceae</taxon>
        <taxon>Oceanobacillus</taxon>
    </lineage>
</organism>
<sequence length="137" mass="15266">MPTINQLVRKGRVSKTKKSDSPALNKGYNSFKKRMTDQNAPQKRGVCTRVGTLTPKKPNSALRKYARVRLSNNMEVTAYIPGIGHNLQEHSVVLIRGGRVKDLPGVRYHIVRGALDTAGVEGRKQGRSKYGTKRPKK</sequence>